<feature type="transit peptide" description="Chloroplast" evidence="3">
    <location>
        <begin position="1"/>
        <end position="37"/>
    </location>
</feature>
<feature type="chain" id="PRO_0000352662" description="NAD(P)H-quinone oxidoreductase subunit M, chloroplastic">
    <location>
        <begin position="38"/>
        <end position="220"/>
    </location>
</feature>
<feature type="region of interest" description="Disordered" evidence="4">
    <location>
        <begin position="20"/>
        <end position="91"/>
    </location>
</feature>
<feature type="compositionally biased region" description="Low complexity" evidence="4">
    <location>
        <begin position="34"/>
        <end position="44"/>
    </location>
</feature>
<proteinExistence type="evidence at transcript level"/>
<dbReference type="EC" id="7.1.1.-" evidence="5"/>
<dbReference type="EMBL" id="AL606459">
    <property type="protein sequence ID" value="CAD41610.1"/>
    <property type="molecule type" value="Genomic_DNA"/>
</dbReference>
<dbReference type="EMBL" id="AL606587">
    <property type="protein sequence ID" value="CAE02779.1"/>
    <property type="molecule type" value="Genomic_DNA"/>
</dbReference>
<dbReference type="EMBL" id="AP008210">
    <property type="protein sequence ID" value="BAF15349.1"/>
    <property type="molecule type" value="Genomic_DNA"/>
</dbReference>
<dbReference type="EMBL" id="AP014960">
    <property type="protein sequence ID" value="BAS90275.1"/>
    <property type="molecule type" value="Genomic_DNA"/>
</dbReference>
<dbReference type="EMBL" id="CM000141">
    <property type="protein sequence ID" value="EAZ31481.1"/>
    <property type="molecule type" value="Genomic_DNA"/>
</dbReference>
<dbReference type="EMBL" id="AK105343">
    <property type="protein sequence ID" value="BAG97201.1"/>
    <property type="molecule type" value="mRNA"/>
</dbReference>
<dbReference type="RefSeq" id="XP_015637290.1">
    <property type="nucleotide sequence ID" value="XM_015781804.1"/>
</dbReference>
<dbReference type="SMR" id="Q7FB12"/>
<dbReference type="BioGRID" id="805567">
    <property type="interactions" value="1"/>
</dbReference>
<dbReference type="FunCoup" id="Q7FB12">
    <property type="interactions" value="1222"/>
</dbReference>
<dbReference type="STRING" id="39947.Q7FB12"/>
<dbReference type="PaxDb" id="39947-Q7FB12"/>
<dbReference type="EnsemblPlants" id="Os04t0539000-01">
    <property type="protein sequence ID" value="Os04t0539000-01"/>
    <property type="gene ID" value="Os04g0539000"/>
</dbReference>
<dbReference type="Gramene" id="Os04t0539000-01">
    <property type="protein sequence ID" value="Os04t0539000-01"/>
    <property type="gene ID" value="Os04g0539000"/>
</dbReference>
<dbReference type="KEGG" id="dosa:Os04g0539000"/>
<dbReference type="eggNOG" id="ENOG502QUN1">
    <property type="taxonomic scope" value="Eukaryota"/>
</dbReference>
<dbReference type="HOGENOM" id="CLU_089187_0_0_1"/>
<dbReference type="InParanoid" id="Q7FB12"/>
<dbReference type="OMA" id="YMASTHF"/>
<dbReference type="OrthoDB" id="2013483at2759"/>
<dbReference type="Proteomes" id="UP000000763">
    <property type="component" value="Chromosome 4"/>
</dbReference>
<dbReference type="Proteomes" id="UP000007752">
    <property type="component" value="Chromosome 4"/>
</dbReference>
<dbReference type="Proteomes" id="UP000059680">
    <property type="component" value="Chromosome 4"/>
</dbReference>
<dbReference type="GO" id="GO:0009535">
    <property type="term" value="C:chloroplast thylakoid membrane"/>
    <property type="evidence" value="ECO:0007669"/>
    <property type="project" value="UniProtKB-SubCell"/>
</dbReference>
<dbReference type="GO" id="GO:0016655">
    <property type="term" value="F:oxidoreductase activity, acting on NAD(P)H, quinone or similar compound as acceptor"/>
    <property type="evidence" value="ECO:0007669"/>
    <property type="project" value="InterPro"/>
</dbReference>
<dbReference type="GO" id="GO:0048038">
    <property type="term" value="F:quinone binding"/>
    <property type="evidence" value="ECO:0007669"/>
    <property type="project" value="UniProtKB-KW"/>
</dbReference>
<dbReference type="InterPro" id="IPR018922">
    <property type="entry name" value="NdhM"/>
</dbReference>
<dbReference type="PANTHER" id="PTHR36900">
    <property type="entry name" value="NAD(P)H-QUINONE OXIDOREDUCTASE SUBUNIT M, CHLOROPLASTIC"/>
    <property type="match status" value="1"/>
</dbReference>
<dbReference type="PANTHER" id="PTHR36900:SF1">
    <property type="entry name" value="NAD(P)H-QUINONE OXIDOREDUCTASE SUBUNIT M, CHLOROPLASTIC"/>
    <property type="match status" value="1"/>
</dbReference>
<dbReference type="Pfam" id="PF10664">
    <property type="entry name" value="NdhM"/>
    <property type="match status" value="1"/>
</dbReference>
<accession>Q7FB12</accession>
<accession>B7EXV4</accession>
<accession>Q7X6B5</accession>
<organism>
    <name type="scientific">Oryza sativa subsp. japonica</name>
    <name type="common">Rice</name>
    <dbReference type="NCBI Taxonomy" id="39947"/>
    <lineage>
        <taxon>Eukaryota</taxon>
        <taxon>Viridiplantae</taxon>
        <taxon>Streptophyta</taxon>
        <taxon>Embryophyta</taxon>
        <taxon>Tracheophyta</taxon>
        <taxon>Spermatophyta</taxon>
        <taxon>Magnoliopsida</taxon>
        <taxon>Liliopsida</taxon>
        <taxon>Poales</taxon>
        <taxon>Poaceae</taxon>
        <taxon>BOP clade</taxon>
        <taxon>Oryzoideae</taxon>
        <taxon>Oryzeae</taxon>
        <taxon>Oryzinae</taxon>
        <taxon>Oryza</taxon>
        <taxon>Oryza sativa</taxon>
    </lineage>
</organism>
<reference key="1">
    <citation type="journal article" date="2002" name="Nature">
        <title>Sequence and analysis of rice chromosome 4.</title>
        <authorList>
            <person name="Feng Q."/>
            <person name="Zhang Y."/>
            <person name="Hao P."/>
            <person name="Wang S."/>
            <person name="Fu G."/>
            <person name="Huang Y."/>
            <person name="Li Y."/>
            <person name="Zhu J."/>
            <person name="Liu Y."/>
            <person name="Hu X."/>
            <person name="Jia P."/>
            <person name="Zhang Y."/>
            <person name="Zhao Q."/>
            <person name="Ying K."/>
            <person name="Yu S."/>
            <person name="Tang Y."/>
            <person name="Weng Q."/>
            <person name="Zhang L."/>
            <person name="Lu Y."/>
            <person name="Mu J."/>
            <person name="Lu Y."/>
            <person name="Zhang L.S."/>
            <person name="Yu Z."/>
            <person name="Fan D."/>
            <person name="Liu X."/>
            <person name="Lu T."/>
            <person name="Li C."/>
            <person name="Wu Y."/>
            <person name="Sun T."/>
            <person name="Lei H."/>
            <person name="Li T."/>
            <person name="Hu H."/>
            <person name="Guan J."/>
            <person name="Wu M."/>
            <person name="Zhang R."/>
            <person name="Zhou B."/>
            <person name="Chen Z."/>
            <person name="Chen L."/>
            <person name="Jin Z."/>
            <person name="Wang R."/>
            <person name="Yin H."/>
            <person name="Cai Z."/>
            <person name="Ren S."/>
            <person name="Lv G."/>
            <person name="Gu W."/>
            <person name="Zhu G."/>
            <person name="Tu Y."/>
            <person name="Jia J."/>
            <person name="Zhang Y."/>
            <person name="Chen J."/>
            <person name="Kang H."/>
            <person name="Chen X."/>
            <person name="Shao C."/>
            <person name="Sun Y."/>
            <person name="Hu Q."/>
            <person name="Zhang X."/>
            <person name="Zhang W."/>
            <person name="Wang L."/>
            <person name="Ding C."/>
            <person name="Sheng H."/>
            <person name="Gu J."/>
            <person name="Chen S."/>
            <person name="Ni L."/>
            <person name="Zhu F."/>
            <person name="Chen W."/>
            <person name="Lan L."/>
            <person name="Lai Y."/>
            <person name="Cheng Z."/>
            <person name="Gu M."/>
            <person name="Jiang J."/>
            <person name="Li J."/>
            <person name="Hong G."/>
            <person name="Xue Y."/>
            <person name="Han B."/>
        </authorList>
    </citation>
    <scope>NUCLEOTIDE SEQUENCE [LARGE SCALE GENOMIC DNA]</scope>
    <source>
        <strain>cv. Nipponbare</strain>
    </source>
</reference>
<reference key="2">
    <citation type="journal article" date="2005" name="Nature">
        <title>The map-based sequence of the rice genome.</title>
        <authorList>
            <consortium name="International rice genome sequencing project (IRGSP)"/>
        </authorList>
    </citation>
    <scope>NUCLEOTIDE SEQUENCE [LARGE SCALE GENOMIC DNA]</scope>
    <source>
        <strain>cv. Nipponbare</strain>
    </source>
</reference>
<reference key="3">
    <citation type="journal article" date="2008" name="Nucleic Acids Res.">
        <title>The rice annotation project database (RAP-DB): 2008 update.</title>
        <authorList>
            <consortium name="The rice annotation project (RAP)"/>
        </authorList>
    </citation>
    <scope>GENOME REANNOTATION</scope>
    <source>
        <strain>cv. Nipponbare</strain>
    </source>
</reference>
<reference key="4">
    <citation type="journal article" date="2013" name="Rice">
        <title>Improvement of the Oryza sativa Nipponbare reference genome using next generation sequence and optical map data.</title>
        <authorList>
            <person name="Kawahara Y."/>
            <person name="de la Bastide M."/>
            <person name="Hamilton J.P."/>
            <person name="Kanamori H."/>
            <person name="McCombie W.R."/>
            <person name="Ouyang S."/>
            <person name="Schwartz D.C."/>
            <person name="Tanaka T."/>
            <person name="Wu J."/>
            <person name="Zhou S."/>
            <person name="Childs K.L."/>
            <person name="Davidson R.M."/>
            <person name="Lin H."/>
            <person name="Quesada-Ocampo L."/>
            <person name="Vaillancourt B."/>
            <person name="Sakai H."/>
            <person name="Lee S.S."/>
            <person name="Kim J."/>
            <person name="Numa H."/>
            <person name="Itoh T."/>
            <person name="Buell C.R."/>
            <person name="Matsumoto T."/>
        </authorList>
    </citation>
    <scope>GENOME REANNOTATION</scope>
    <source>
        <strain>cv. Nipponbare</strain>
    </source>
</reference>
<reference key="5">
    <citation type="journal article" date="2005" name="PLoS Biol.">
        <title>The genomes of Oryza sativa: a history of duplications.</title>
        <authorList>
            <person name="Yu J."/>
            <person name="Wang J."/>
            <person name="Lin W."/>
            <person name="Li S."/>
            <person name="Li H."/>
            <person name="Zhou J."/>
            <person name="Ni P."/>
            <person name="Dong W."/>
            <person name="Hu S."/>
            <person name="Zeng C."/>
            <person name="Zhang J."/>
            <person name="Zhang Y."/>
            <person name="Li R."/>
            <person name="Xu Z."/>
            <person name="Li S."/>
            <person name="Li X."/>
            <person name="Zheng H."/>
            <person name="Cong L."/>
            <person name="Lin L."/>
            <person name="Yin J."/>
            <person name="Geng J."/>
            <person name="Li G."/>
            <person name="Shi J."/>
            <person name="Liu J."/>
            <person name="Lv H."/>
            <person name="Li J."/>
            <person name="Wang J."/>
            <person name="Deng Y."/>
            <person name="Ran L."/>
            <person name="Shi X."/>
            <person name="Wang X."/>
            <person name="Wu Q."/>
            <person name="Li C."/>
            <person name="Ren X."/>
            <person name="Wang J."/>
            <person name="Wang X."/>
            <person name="Li D."/>
            <person name="Liu D."/>
            <person name="Zhang X."/>
            <person name="Ji Z."/>
            <person name="Zhao W."/>
            <person name="Sun Y."/>
            <person name="Zhang Z."/>
            <person name="Bao J."/>
            <person name="Han Y."/>
            <person name="Dong L."/>
            <person name="Ji J."/>
            <person name="Chen P."/>
            <person name="Wu S."/>
            <person name="Liu J."/>
            <person name="Xiao Y."/>
            <person name="Bu D."/>
            <person name="Tan J."/>
            <person name="Yang L."/>
            <person name="Ye C."/>
            <person name="Zhang J."/>
            <person name="Xu J."/>
            <person name="Zhou Y."/>
            <person name="Yu Y."/>
            <person name="Zhang B."/>
            <person name="Zhuang S."/>
            <person name="Wei H."/>
            <person name="Liu B."/>
            <person name="Lei M."/>
            <person name="Yu H."/>
            <person name="Li Y."/>
            <person name="Xu H."/>
            <person name="Wei S."/>
            <person name="He X."/>
            <person name="Fang L."/>
            <person name="Zhang Z."/>
            <person name="Zhang Y."/>
            <person name="Huang X."/>
            <person name="Su Z."/>
            <person name="Tong W."/>
            <person name="Li J."/>
            <person name="Tong Z."/>
            <person name="Li S."/>
            <person name="Ye J."/>
            <person name="Wang L."/>
            <person name="Fang L."/>
            <person name="Lei T."/>
            <person name="Chen C.-S."/>
            <person name="Chen H.-C."/>
            <person name="Xu Z."/>
            <person name="Li H."/>
            <person name="Huang H."/>
            <person name="Zhang F."/>
            <person name="Xu H."/>
            <person name="Li N."/>
            <person name="Zhao C."/>
            <person name="Li S."/>
            <person name="Dong L."/>
            <person name="Huang Y."/>
            <person name="Li L."/>
            <person name="Xi Y."/>
            <person name="Qi Q."/>
            <person name="Li W."/>
            <person name="Zhang B."/>
            <person name="Hu W."/>
            <person name="Zhang Y."/>
            <person name="Tian X."/>
            <person name="Jiao Y."/>
            <person name="Liang X."/>
            <person name="Jin J."/>
            <person name="Gao L."/>
            <person name="Zheng W."/>
            <person name="Hao B."/>
            <person name="Liu S.-M."/>
            <person name="Wang W."/>
            <person name="Yuan L."/>
            <person name="Cao M."/>
            <person name="McDermott J."/>
            <person name="Samudrala R."/>
            <person name="Wang J."/>
            <person name="Wong G.K.-S."/>
            <person name="Yang H."/>
        </authorList>
    </citation>
    <scope>NUCLEOTIDE SEQUENCE [LARGE SCALE GENOMIC DNA]</scope>
    <source>
        <strain>cv. Nipponbare</strain>
    </source>
</reference>
<reference key="6">
    <citation type="journal article" date="2003" name="Science">
        <title>Collection, mapping, and annotation of over 28,000 cDNA clones from japonica rice.</title>
        <authorList>
            <consortium name="The rice full-length cDNA consortium"/>
        </authorList>
    </citation>
    <scope>NUCLEOTIDE SEQUENCE [LARGE SCALE MRNA]</scope>
    <source>
        <strain>cv. Nipponbare</strain>
    </source>
</reference>
<gene>
    <name evidence="5" type="primary">ndhM</name>
    <name evidence="1" type="synonym">NDH-M</name>
    <name type="ordered locus">Os04g0539000</name>
    <name type="ordered locus">LOC_Os04g45600</name>
    <name type="ORF">OsJ_014964</name>
    <name type="ORF">OSJNBa0011L07.3</name>
    <name type="ORF">OSJNBa0091D06.25</name>
</gene>
<evidence type="ECO:0000250" key="1">
    <source>
        <dbReference type="UniProtKB" id="Q2V2S7"/>
    </source>
</evidence>
<evidence type="ECO:0000250" key="2">
    <source>
        <dbReference type="UniProtKB" id="Q9CAC5"/>
    </source>
</evidence>
<evidence type="ECO:0000255" key="3"/>
<evidence type="ECO:0000256" key="4">
    <source>
        <dbReference type="SAM" id="MobiDB-lite"/>
    </source>
</evidence>
<evidence type="ECO:0000305" key="5"/>
<protein>
    <recommendedName>
        <fullName evidence="5">NAD(P)H-quinone oxidoreductase subunit M, chloroplastic</fullName>
        <ecNumber evidence="5">7.1.1.-</ecNumber>
    </recommendedName>
    <alternativeName>
        <fullName evidence="5">NAD(P)H dehydrogenase subunit M</fullName>
        <shortName evidence="5">NDH subunit M</shortName>
        <shortName evidence="1">NDH-M</shortName>
    </alternativeName>
    <alternativeName>
        <fullName evidence="5">NADH-plastoquinone oxidoreductase subunit M</fullName>
    </alternativeName>
</protein>
<name>NDHM_ORYSJ</name>
<sequence>MATTASPFLSPAKLSLERRLPRATWTARRSVRFPPVRAQDQQQQVKEEEEEAAVENLPPPPQEEEQRRERKTRRQGPAQPLPVQPLAESKNMSREYGGQWLSCTTRHIRIYAAYINPETNAFDQTQMDKLTLLLDPTDEFVWTDETCQKVYDEFQDLVDHYEGAELSEYTLRLIGSDLEHFIRKLLYDGEIKYNMMSRVLNFSMGKPRIKFNSSQIPDVK</sequence>
<comment type="function">
    <text evidence="5">NDH shuttles electrons from NAD(P)H:plastoquinone, via FMN and iron-sulfur (Fe-S) centers, to quinones in the photosynthetic chain and possibly in a chloroplast respiratory chain. The immediate electron acceptor for the enzyme in this species is believed to be plastoquinone. Couples the redox reaction to proton translocation, and thus conserves the redox energy in a proton gradient.</text>
</comment>
<comment type="catalytic activity">
    <reaction evidence="5">
        <text>a plastoquinone + NADH + (n+1) H(+)(in) = a plastoquinol + NAD(+) + n H(+)(out)</text>
        <dbReference type="Rhea" id="RHEA:42608"/>
        <dbReference type="Rhea" id="RHEA-COMP:9561"/>
        <dbReference type="Rhea" id="RHEA-COMP:9562"/>
        <dbReference type="ChEBI" id="CHEBI:15378"/>
        <dbReference type="ChEBI" id="CHEBI:17757"/>
        <dbReference type="ChEBI" id="CHEBI:57540"/>
        <dbReference type="ChEBI" id="CHEBI:57945"/>
        <dbReference type="ChEBI" id="CHEBI:62192"/>
    </reaction>
</comment>
<comment type="catalytic activity">
    <reaction evidence="5">
        <text>a plastoquinone + NADPH + (n+1) H(+)(in) = a plastoquinol + NADP(+) + n H(+)(out)</text>
        <dbReference type="Rhea" id="RHEA:42612"/>
        <dbReference type="Rhea" id="RHEA-COMP:9561"/>
        <dbReference type="Rhea" id="RHEA-COMP:9562"/>
        <dbReference type="ChEBI" id="CHEBI:15378"/>
        <dbReference type="ChEBI" id="CHEBI:17757"/>
        <dbReference type="ChEBI" id="CHEBI:57783"/>
        <dbReference type="ChEBI" id="CHEBI:58349"/>
        <dbReference type="ChEBI" id="CHEBI:62192"/>
    </reaction>
</comment>
<comment type="subunit">
    <text evidence="1">Part of the chloroplast NDH complex, composed of a mixture of chloroplast and nucleus encoded subunits. Component of the NDH subcomplex A, at least composed of ndhH, ndhI, ndhJ, ndhK, ndhL, ndhM, ndhN and ndhO.</text>
</comment>
<comment type="subcellular location">
    <subcellularLocation>
        <location evidence="2">Plastid</location>
        <location evidence="2">Chloroplast thylakoid membrane</location>
        <topology evidence="5">Peripheral membrane protein</topology>
        <orientation evidence="5">Stromal side</orientation>
    </subcellularLocation>
</comment>
<comment type="similarity">
    <text evidence="5">Belongs to the NDH complex subunit M family.</text>
</comment>
<keyword id="KW-0150">Chloroplast</keyword>
<keyword id="KW-0472">Membrane</keyword>
<keyword id="KW-0520">NAD</keyword>
<keyword id="KW-0521">NADP</keyword>
<keyword id="KW-0934">Plastid</keyword>
<keyword id="KW-0618">Plastoquinone</keyword>
<keyword id="KW-0874">Quinone</keyword>
<keyword id="KW-1185">Reference proteome</keyword>
<keyword id="KW-0793">Thylakoid</keyword>
<keyword id="KW-0809">Transit peptide</keyword>
<keyword id="KW-1278">Translocase</keyword>
<keyword id="KW-0813">Transport</keyword>